<dbReference type="EMBL" id="AF353096">
    <property type="protein sequence ID" value="AAK29673.1"/>
    <property type="molecule type" value="mRNA"/>
</dbReference>
<dbReference type="EMBL" id="AB005241">
    <property type="protein sequence ID" value="BAB11536.1"/>
    <property type="molecule type" value="Genomic_DNA"/>
</dbReference>
<dbReference type="EMBL" id="AB010692">
    <property type="protein sequence ID" value="BAB11536.1"/>
    <property type="status" value="JOINED"/>
    <property type="molecule type" value="Genomic_DNA"/>
</dbReference>
<dbReference type="EMBL" id="CP002688">
    <property type="protein sequence ID" value="AED90877.1"/>
    <property type="molecule type" value="Genomic_DNA"/>
</dbReference>
<dbReference type="EMBL" id="AK117513">
    <property type="protein sequence ID" value="BAC42176.1"/>
    <property type="molecule type" value="mRNA"/>
</dbReference>
<dbReference type="EMBL" id="AF324988">
    <property type="protein sequence ID" value="AAG40340.1"/>
    <property type="molecule type" value="mRNA"/>
</dbReference>
<dbReference type="EMBL" id="BT024879">
    <property type="protein sequence ID" value="ABD85150.1"/>
    <property type="molecule type" value="mRNA"/>
</dbReference>
<dbReference type="SMR" id="Q9FE78"/>
<dbReference type="FunCoup" id="Q9FE78">
    <property type="interactions" value="4361"/>
</dbReference>
<dbReference type="IntAct" id="Q9FE78">
    <property type="interactions" value="2"/>
</dbReference>
<dbReference type="STRING" id="3702.Q9FE78"/>
<dbReference type="iPTMnet" id="Q9FE78"/>
<dbReference type="PaxDb" id="3702-AT5G05470.1"/>
<dbReference type="ProteomicsDB" id="232222"/>
<dbReference type="EnsemblPlants" id="AT5G05470.1">
    <property type="protein sequence ID" value="AT5G05470.1"/>
    <property type="gene ID" value="AT5G05470"/>
</dbReference>
<dbReference type="Gramene" id="AT5G05470.1">
    <property type="protein sequence ID" value="AT5G05470.1"/>
    <property type="gene ID" value="AT5G05470"/>
</dbReference>
<dbReference type="KEGG" id="ath:AT5G05470"/>
<dbReference type="Araport" id="AT5G05470"/>
<dbReference type="TAIR" id="AT5G05470">
    <property type="gene designation" value="EIF2 ALPHA"/>
</dbReference>
<dbReference type="eggNOG" id="KOG2916">
    <property type="taxonomic scope" value="Eukaryota"/>
</dbReference>
<dbReference type="HOGENOM" id="CLU_033458_0_1_1"/>
<dbReference type="InParanoid" id="Q9FE78"/>
<dbReference type="OMA" id="YKKHGHA"/>
<dbReference type="OrthoDB" id="1685042at2759"/>
<dbReference type="PhylomeDB" id="Q9FE78"/>
<dbReference type="CD-CODE" id="4299E36E">
    <property type="entry name" value="Nucleolus"/>
</dbReference>
<dbReference type="PRO" id="PR:Q9FE78"/>
<dbReference type="Proteomes" id="UP000006548">
    <property type="component" value="Chromosome 5"/>
</dbReference>
<dbReference type="ExpressionAtlas" id="Q9FE78">
    <property type="expression patterns" value="baseline and differential"/>
</dbReference>
<dbReference type="GO" id="GO:0005829">
    <property type="term" value="C:cytosol"/>
    <property type="evidence" value="ECO:0007669"/>
    <property type="project" value="UniProtKB-SubCell"/>
</dbReference>
<dbReference type="GO" id="GO:0005850">
    <property type="term" value="C:eukaryotic translation initiation factor 2 complex"/>
    <property type="evidence" value="ECO:0000250"/>
    <property type="project" value="UniProtKB"/>
</dbReference>
<dbReference type="GO" id="GO:0005886">
    <property type="term" value="C:plasma membrane"/>
    <property type="evidence" value="ECO:0007005"/>
    <property type="project" value="TAIR"/>
</dbReference>
<dbReference type="GO" id="GO:0003723">
    <property type="term" value="F:RNA binding"/>
    <property type="evidence" value="ECO:0007669"/>
    <property type="project" value="InterPro"/>
</dbReference>
<dbReference type="GO" id="GO:0003743">
    <property type="term" value="F:translation initiation factor activity"/>
    <property type="evidence" value="ECO:0007669"/>
    <property type="project" value="UniProtKB-KW"/>
</dbReference>
<dbReference type="GO" id="GO:0006417">
    <property type="term" value="P:regulation of translation"/>
    <property type="evidence" value="ECO:0007669"/>
    <property type="project" value="UniProtKB-KW"/>
</dbReference>
<dbReference type="CDD" id="cd04452">
    <property type="entry name" value="S1_IF2_alpha"/>
    <property type="match status" value="1"/>
</dbReference>
<dbReference type="FunFam" id="3.30.70.1130:FF:000001">
    <property type="entry name" value="Eukaryotic translation initiation factor 2 subunit 1"/>
    <property type="match status" value="1"/>
</dbReference>
<dbReference type="FunFam" id="1.10.150.190:FF:000003">
    <property type="entry name" value="Eukaryotic translation initiation factor 2 subunit alpha"/>
    <property type="match status" value="1"/>
</dbReference>
<dbReference type="FunFam" id="2.40.50.140:FF:000015">
    <property type="entry name" value="Eukaryotic translation initiation factor 2 subunit alpha"/>
    <property type="match status" value="1"/>
</dbReference>
<dbReference type="Gene3D" id="3.30.70.1130">
    <property type="entry name" value="EIF_2_alpha"/>
    <property type="match status" value="1"/>
</dbReference>
<dbReference type="Gene3D" id="2.40.50.140">
    <property type="entry name" value="Nucleic acid-binding proteins"/>
    <property type="match status" value="1"/>
</dbReference>
<dbReference type="Gene3D" id="1.10.150.190">
    <property type="entry name" value="Translation initiation factor 2, subunit 1, domain 2"/>
    <property type="match status" value="1"/>
</dbReference>
<dbReference type="InterPro" id="IPR012340">
    <property type="entry name" value="NA-bd_OB-fold"/>
</dbReference>
<dbReference type="InterPro" id="IPR003029">
    <property type="entry name" value="S1_domain"/>
</dbReference>
<dbReference type="InterPro" id="IPR044126">
    <property type="entry name" value="S1_IF2_alpha"/>
</dbReference>
<dbReference type="InterPro" id="IPR024055">
    <property type="entry name" value="TIF2_asu_C"/>
</dbReference>
<dbReference type="InterPro" id="IPR024054">
    <property type="entry name" value="TIF2_asu_middle_sf"/>
</dbReference>
<dbReference type="InterPro" id="IPR011488">
    <property type="entry name" value="TIF_2_asu"/>
</dbReference>
<dbReference type="PANTHER" id="PTHR10602">
    <property type="entry name" value="EUKARYOTIC TRANSLATION INITIATION FACTOR 2 SUBUNIT 1"/>
    <property type="match status" value="1"/>
</dbReference>
<dbReference type="PANTHER" id="PTHR10602:SF0">
    <property type="entry name" value="EUKARYOTIC TRANSLATION INITIATION FACTOR 2 SUBUNIT 1"/>
    <property type="match status" value="1"/>
</dbReference>
<dbReference type="Pfam" id="PF07541">
    <property type="entry name" value="EIF_2_alpha"/>
    <property type="match status" value="1"/>
</dbReference>
<dbReference type="Pfam" id="PF00575">
    <property type="entry name" value="S1"/>
    <property type="match status" value="1"/>
</dbReference>
<dbReference type="SMART" id="SM00316">
    <property type="entry name" value="S1"/>
    <property type="match status" value="1"/>
</dbReference>
<dbReference type="SUPFAM" id="SSF110993">
    <property type="entry name" value="eIF-2-alpha, C-terminal domain"/>
    <property type="match status" value="1"/>
</dbReference>
<dbReference type="SUPFAM" id="SSF116742">
    <property type="entry name" value="eIF2alpha middle domain-like"/>
    <property type="match status" value="1"/>
</dbReference>
<dbReference type="SUPFAM" id="SSF50249">
    <property type="entry name" value="Nucleic acid-binding proteins"/>
    <property type="match status" value="1"/>
</dbReference>
<dbReference type="PROSITE" id="PS50126">
    <property type="entry name" value="S1"/>
    <property type="match status" value="1"/>
</dbReference>
<evidence type="ECO:0000250" key="1">
    <source>
        <dbReference type="UniProtKB" id="P20459"/>
    </source>
</evidence>
<evidence type="ECO:0000250" key="2">
    <source>
        <dbReference type="UniProtKB" id="P56286"/>
    </source>
</evidence>
<evidence type="ECO:0000255" key="3">
    <source>
        <dbReference type="PROSITE-ProRule" id="PRU00180"/>
    </source>
</evidence>
<evidence type="ECO:0000256" key="4">
    <source>
        <dbReference type="SAM" id="MobiDB-lite"/>
    </source>
</evidence>
<evidence type="ECO:0000305" key="5"/>
<evidence type="ECO:0000305" key="6">
    <source>
    </source>
</evidence>
<evidence type="ECO:0000305" key="7">
    <source>
    </source>
</evidence>
<evidence type="ECO:0000312" key="8">
    <source>
        <dbReference type="Araport" id="AT5G05470"/>
    </source>
</evidence>
<evidence type="ECO:0000312" key="9">
    <source>
        <dbReference type="EMBL" id="BAB11536.1"/>
    </source>
</evidence>
<protein>
    <recommendedName>
        <fullName evidence="5">Eukaryotic translation initiation factor 2 subunit alpha</fullName>
        <shortName>eIF-2-alpha</shortName>
        <shortName>eIF-2A</shortName>
        <shortName>eIF-2alpha</shortName>
        <shortName>eIF2-alpha</shortName>
    </recommendedName>
</protein>
<sequence length="344" mass="38801">MANPAPNLECRMYESRYPDVDMAVMIQVKTIADMGAYVSLLEYNNIEGMILFSELSRRRIRSISSLIKVGRTEPVMVLRVDRERGYIDLSKRRVSDEDKEACEERYNKSKLVHSIMRHVAETVGVDLEELYVNIGWPLYKKHGHAFEAFKIVVTDPDSVFDALTREVKETGPDGVEVTKVVPAVSEELKDAFLKDIRRRMTPQPMKIRADIELKCFQFDGVLHIKEAMKKAEAVGTDDCPVKIKLVAPPLYVLTTHTHYKEKGIVTLNKAIEACITAIEEHKGKLVVKEGARAVSERDDKLLAEHMAKLRMDNEEMSGDEGSEDEEEDTGMGEVDIDGGSGIIE</sequence>
<accession>Q9FE78</accession>
<accession>Q9C5N6</accession>
<organism>
    <name type="scientific">Arabidopsis thaliana</name>
    <name type="common">Mouse-ear cress</name>
    <dbReference type="NCBI Taxonomy" id="3702"/>
    <lineage>
        <taxon>Eukaryota</taxon>
        <taxon>Viridiplantae</taxon>
        <taxon>Streptophyta</taxon>
        <taxon>Embryophyta</taxon>
        <taxon>Tracheophyta</taxon>
        <taxon>Spermatophyta</taxon>
        <taxon>Magnoliopsida</taxon>
        <taxon>eudicotyledons</taxon>
        <taxon>Gunneridae</taxon>
        <taxon>Pentapetalae</taxon>
        <taxon>rosids</taxon>
        <taxon>malvids</taxon>
        <taxon>Brassicales</taxon>
        <taxon>Brassicaceae</taxon>
        <taxon>Camelineae</taxon>
        <taxon>Arabidopsis</taxon>
    </lineage>
</organism>
<comment type="function">
    <text evidence="1">Functions in the early steps of protein synthesis by forming a ternary complex with GTP and initiator tRNA. This complex binds to a 40S ribosomal subunit, followed by mRNA binding to form a 43S pre-initiation complex. Junction of the 60S ribosomal subunit to form the 80S initiation complex is preceded by hydrolysis of the GTP bound to eIF-2 and release of an eIF-2-GDP binary complex. In order for eIF-2 to recycle and catalyze another round of initiation, the GDP bound to eIF-2 must exchange with GTP by way of a reaction catalyzed by eIF2B.</text>
</comment>
<comment type="subunit">
    <text evidence="1">Eukaryotic translation initiation factor 2 eIF2 is a heterotrimeric complex composed of an alpha, a beta and a gamma subunit.</text>
</comment>
<comment type="subcellular location">
    <subcellularLocation>
        <location evidence="2">Cytoplasm</location>
        <location evidence="2">Cytosol</location>
    </subcellularLocation>
</comment>
<comment type="PTM">
    <text evidence="6 7">Phosphorylated at Ser-56 by GCN2 (Probable). Phosphorylated at Ser-317 and Ser-322 by CK2 (Probable).</text>
</comment>
<comment type="similarity">
    <text evidence="5">Belongs to the eIF-2-alpha family.</text>
</comment>
<feature type="chain" id="PRO_0000437153" description="Eukaryotic translation initiation factor 2 subunit alpha">
    <location>
        <begin position="1"/>
        <end position="344"/>
    </location>
</feature>
<feature type="domain" description="S1 motif" evidence="3">
    <location>
        <begin position="21"/>
        <end position="92"/>
    </location>
</feature>
<feature type="region of interest" description="Disordered" evidence="4">
    <location>
        <begin position="309"/>
        <end position="344"/>
    </location>
</feature>
<feature type="compositionally biased region" description="Acidic residues" evidence="4">
    <location>
        <begin position="314"/>
        <end position="336"/>
    </location>
</feature>
<feature type="modified residue" description="Phosphoserine; by GCN2" evidence="7">
    <location>
        <position position="56"/>
    </location>
</feature>
<feature type="modified residue" description="Phosphoserine; by CK2" evidence="6">
    <location>
        <position position="317"/>
    </location>
</feature>
<feature type="modified residue" description="Phosphoserine; by CK2" evidence="6">
    <location>
        <position position="322"/>
    </location>
</feature>
<feature type="sequence conflict" description="In Ref. 1; AAK29673." evidence="5" ref="1">
    <original>R</original>
    <variation>G</variation>
    <location>
        <position position="61"/>
    </location>
</feature>
<feature type="sequence conflict" description="In Ref. 1; AAK29673." evidence="5" ref="1">
    <location>
        <position position="325"/>
    </location>
</feature>
<proteinExistence type="evidence at protein level"/>
<keyword id="KW-0963">Cytoplasm</keyword>
<keyword id="KW-0396">Initiation factor</keyword>
<keyword id="KW-0597">Phosphoprotein</keyword>
<keyword id="KW-0648">Protein biosynthesis</keyword>
<keyword id="KW-1185">Reference proteome</keyword>
<keyword id="KW-0810">Translation regulation</keyword>
<name>IF2A_ARATH</name>
<gene>
    <name evidence="5" type="primary">EIF2A</name>
    <name evidence="8" type="ordered locus">At5g05470</name>
    <name evidence="9" type="ORF">K18I23.28</name>
</gene>
<reference key="1">
    <citation type="submission" date="2001-02" db="EMBL/GenBank/DDBJ databases">
        <title>Arabidopsis thaliana protein synthesis initiation factor eIF2 alpha mRNA.</title>
        <authorList>
            <person name="Browning K.S."/>
            <person name="Chen R."/>
        </authorList>
    </citation>
    <scope>NUCLEOTIDE SEQUENCE [MRNA]</scope>
</reference>
<reference key="2">
    <citation type="journal article" date="1997" name="DNA Res.">
        <title>Structural analysis of Arabidopsis thaliana chromosome 5. I. Sequence features of the 1.6 Mb regions covered by twenty physically assigned P1 clones.</title>
        <authorList>
            <person name="Sato S."/>
            <person name="Kotani H."/>
            <person name="Nakamura Y."/>
            <person name="Kaneko T."/>
            <person name="Asamizu E."/>
            <person name="Fukami M."/>
            <person name="Miyajima N."/>
            <person name="Tabata S."/>
        </authorList>
    </citation>
    <scope>NUCLEOTIDE SEQUENCE [LARGE SCALE GENOMIC DNA]</scope>
    <source>
        <strain>cv. Columbia</strain>
    </source>
</reference>
<reference key="3">
    <citation type="journal article" date="1998" name="DNA Res.">
        <title>Structural analysis of Arabidopsis thaliana chromosome 5. V. Sequence features of the regions of 1,381,565 bp covered by twenty one physically assigned P1 and TAC clones.</title>
        <authorList>
            <person name="Kaneko T."/>
            <person name="Kotani H."/>
            <person name="Nakamura Y."/>
            <person name="Sato S."/>
            <person name="Asamizu E."/>
            <person name="Miyajima N."/>
            <person name="Tabata S."/>
        </authorList>
    </citation>
    <scope>NUCLEOTIDE SEQUENCE [LARGE SCALE GENOMIC DNA]</scope>
    <source>
        <strain>cv. Columbia</strain>
    </source>
</reference>
<reference key="4">
    <citation type="journal article" date="2017" name="Plant J.">
        <title>Araport11: a complete reannotation of the Arabidopsis thaliana reference genome.</title>
        <authorList>
            <person name="Cheng C.Y."/>
            <person name="Krishnakumar V."/>
            <person name="Chan A.P."/>
            <person name="Thibaud-Nissen F."/>
            <person name="Schobel S."/>
            <person name="Town C.D."/>
        </authorList>
    </citation>
    <scope>GENOME REANNOTATION</scope>
    <source>
        <strain>cv. Columbia</strain>
    </source>
</reference>
<reference key="5">
    <citation type="journal article" date="2002" name="Science">
        <title>Functional annotation of a full-length Arabidopsis cDNA collection.</title>
        <authorList>
            <person name="Seki M."/>
            <person name="Narusaka M."/>
            <person name="Kamiya A."/>
            <person name="Ishida J."/>
            <person name="Satou M."/>
            <person name="Sakurai T."/>
            <person name="Nakajima M."/>
            <person name="Enju A."/>
            <person name="Akiyama K."/>
            <person name="Oono Y."/>
            <person name="Muramatsu M."/>
            <person name="Hayashizaki Y."/>
            <person name="Kawai J."/>
            <person name="Carninci P."/>
            <person name="Itoh M."/>
            <person name="Ishii Y."/>
            <person name="Arakawa T."/>
            <person name="Shibata K."/>
            <person name="Shinagawa A."/>
            <person name="Shinozaki K."/>
        </authorList>
    </citation>
    <scope>NUCLEOTIDE SEQUENCE [LARGE SCALE MRNA]</scope>
    <source>
        <strain>cv. Columbia</strain>
    </source>
</reference>
<reference key="6">
    <citation type="journal article" date="2003" name="Science">
        <title>Empirical analysis of transcriptional activity in the Arabidopsis genome.</title>
        <authorList>
            <person name="Yamada K."/>
            <person name="Lim J."/>
            <person name="Dale J.M."/>
            <person name="Chen H."/>
            <person name="Shinn P."/>
            <person name="Palm C.J."/>
            <person name="Southwick A.M."/>
            <person name="Wu H.C."/>
            <person name="Kim C.J."/>
            <person name="Nguyen M."/>
            <person name="Pham P.K."/>
            <person name="Cheuk R.F."/>
            <person name="Karlin-Newmann G."/>
            <person name="Liu S.X."/>
            <person name="Lam B."/>
            <person name="Sakano H."/>
            <person name="Wu T."/>
            <person name="Yu G."/>
            <person name="Miranda M."/>
            <person name="Quach H.L."/>
            <person name="Tripp M."/>
            <person name="Chang C.H."/>
            <person name="Lee J.M."/>
            <person name="Toriumi M.J."/>
            <person name="Chan M.M."/>
            <person name="Tang C.C."/>
            <person name="Onodera C.S."/>
            <person name="Deng J.M."/>
            <person name="Akiyama K."/>
            <person name="Ansari Y."/>
            <person name="Arakawa T."/>
            <person name="Banh J."/>
            <person name="Banno F."/>
            <person name="Bowser L."/>
            <person name="Brooks S.Y."/>
            <person name="Carninci P."/>
            <person name="Chao Q."/>
            <person name="Choy N."/>
            <person name="Enju A."/>
            <person name="Goldsmith A.D."/>
            <person name="Gurjal M."/>
            <person name="Hansen N.F."/>
            <person name="Hayashizaki Y."/>
            <person name="Johnson-Hopson C."/>
            <person name="Hsuan V.W."/>
            <person name="Iida K."/>
            <person name="Karnes M."/>
            <person name="Khan S."/>
            <person name="Koesema E."/>
            <person name="Ishida J."/>
            <person name="Jiang P.X."/>
            <person name="Jones T."/>
            <person name="Kawai J."/>
            <person name="Kamiya A."/>
            <person name="Meyers C."/>
            <person name="Nakajima M."/>
            <person name="Narusaka M."/>
            <person name="Seki M."/>
            <person name="Sakurai T."/>
            <person name="Satou M."/>
            <person name="Tamse R."/>
            <person name="Vaysberg M."/>
            <person name="Wallender E.K."/>
            <person name="Wong C."/>
            <person name="Yamamura Y."/>
            <person name="Yuan S."/>
            <person name="Shinozaki K."/>
            <person name="Davis R.W."/>
            <person name="Theologis A."/>
            <person name="Ecker J.R."/>
        </authorList>
    </citation>
    <scope>NUCLEOTIDE SEQUENCE [LARGE SCALE MRNA]</scope>
    <source>
        <strain>cv. Columbia</strain>
    </source>
</reference>
<reference key="7">
    <citation type="submission" date="2006-03" db="EMBL/GenBank/DDBJ databases">
        <title>Arabidopsis ORF clones.</title>
        <authorList>
            <person name="Shinn P."/>
            <person name="Chen H."/>
            <person name="Kim C.J."/>
            <person name="Ecker J.R."/>
        </authorList>
    </citation>
    <scope>NUCLEOTIDE SEQUENCE [LARGE SCALE MRNA]</scope>
    <source>
        <strain>cv. Columbia</strain>
    </source>
</reference>
<reference key="8">
    <citation type="journal article" date="2009" name="J. Biol. Chem.">
        <title>Phosphorylation of plant translation initiation factors by CK2 enhances the in vitro interaction of multifactor complex components.</title>
        <authorList>
            <person name="Dennis M.D."/>
            <person name="Person M.D."/>
            <person name="Browning K.S."/>
        </authorList>
    </citation>
    <scope>PHOSPHORYLATION AT SER-317 AND SER-322</scope>
</reference>
<reference key="9">
    <citation type="journal article" date="2013" name="Plant Biol.">
        <title>The GCN2 homologue in Arabidopsis thaliana interacts with uncharged tRNA and uses Arabidopsis eIF2alpha molecules as direct substrates.</title>
        <authorList>
            <person name="Li M.W."/>
            <person name="Auyeung W.K."/>
            <person name="Lam H.M."/>
        </authorList>
    </citation>
    <scope>PHOSPHORYLATION AT SER-56</scope>
</reference>